<comment type="function">
    <text evidence="1">Catalyzes the decarboxylation of 3-octaprenyl-4-hydroxy benzoate to 2-octaprenylphenol, an intermediate step in ubiquinone biosynthesis.</text>
</comment>
<comment type="catalytic activity">
    <reaction evidence="1">
        <text>a 4-hydroxy-3-(all-trans-polyprenyl)benzoate + H(+) = a 2-(all-trans-polyprenyl)phenol + CO2</text>
        <dbReference type="Rhea" id="RHEA:41680"/>
        <dbReference type="Rhea" id="RHEA-COMP:9514"/>
        <dbReference type="Rhea" id="RHEA-COMP:9516"/>
        <dbReference type="ChEBI" id="CHEBI:1269"/>
        <dbReference type="ChEBI" id="CHEBI:15378"/>
        <dbReference type="ChEBI" id="CHEBI:16526"/>
        <dbReference type="ChEBI" id="CHEBI:78396"/>
        <dbReference type="EC" id="4.1.1.98"/>
    </reaction>
</comment>
<comment type="cofactor">
    <cofactor evidence="1">
        <name>prenylated FMN</name>
        <dbReference type="ChEBI" id="CHEBI:87746"/>
    </cofactor>
    <text evidence="1">Binds 1 prenylated FMN per subunit.</text>
</comment>
<comment type="cofactor">
    <cofactor evidence="1">
        <name>Mn(2+)</name>
        <dbReference type="ChEBI" id="CHEBI:29035"/>
    </cofactor>
</comment>
<comment type="pathway">
    <text evidence="1">Cofactor biosynthesis; ubiquinone biosynthesis.</text>
</comment>
<comment type="subunit">
    <text evidence="1">Homohexamer.</text>
</comment>
<comment type="subcellular location">
    <subcellularLocation>
        <location evidence="1">Cell membrane</location>
        <topology evidence="1">Peripheral membrane protein</topology>
    </subcellularLocation>
</comment>
<comment type="similarity">
    <text evidence="1">Belongs to the UbiD family.</text>
</comment>
<comment type="sequence caution" evidence="2">
    <conflict type="erroneous initiation">
        <sequence resource="EMBL-CDS" id="ABJ03320"/>
    </conflict>
</comment>
<reference key="1">
    <citation type="journal article" date="2007" name="J. Bacteriol.">
        <title>The genome sequence of avian pathogenic Escherichia coli strain O1:K1:H7 shares strong similarities with human extraintestinal pathogenic E. coli genomes.</title>
        <authorList>
            <person name="Johnson T.J."/>
            <person name="Kariyawasam S."/>
            <person name="Wannemuehler Y."/>
            <person name="Mangiamele P."/>
            <person name="Johnson S.J."/>
            <person name="Doetkott C."/>
            <person name="Skyberg J.A."/>
            <person name="Lynne A.M."/>
            <person name="Johnson J.R."/>
            <person name="Nolan L.K."/>
        </authorList>
    </citation>
    <scope>NUCLEOTIDE SEQUENCE [LARGE SCALE GENOMIC DNA]</scope>
</reference>
<protein>
    <recommendedName>
        <fullName evidence="1">3-octaprenyl-4-hydroxybenzoate carboxy-lyase</fullName>
        <ecNumber evidence="1">4.1.1.98</ecNumber>
    </recommendedName>
    <alternativeName>
        <fullName evidence="1">Polyprenyl p-hydroxybenzoate decarboxylase</fullName>
    </alternativeName>
</protein>
<accession>A1AI30</accession>
<keyword id="KW-1003">Cell membrane</keyword>
<keyword id="KW-0210">Decarboxylase</keyword>
<keyword id="KW-0285">Flavoprotein</keyword>
<keyword id="KW-0288">FMN</keyword>
<keyword id="KW-0456">Lyase</keyword>
<keyword id="KW-0464">Manganese</keyword>
<keyword id="KW-0472">Membrane</keyword>
<keyword id="KW-0479">Metal-binding</keyword>
<keyword id="KW-1185">Reference proteome</keyword>
<keyword id="KW-0831">Ubiquinone biosynthesis</keyword>
<name>UBID_ECOK1</name>
<gene>
    <name evidence="1" type="primary">ubiD</name>
    <name type="ordered locus">Ecok1_38260</name>
    <name type="ORF">APECO1_2614</name>
</gene>
<sequence>MKYNDLRDFLTLLEQQGELKRITLPVDPHLEITEIADRTLRAGGPALLFENPKGYSMPVLCNLFGTPKRVAMGMGQEDVSALREVGKLLAFLKEPEPPKGFRDLFDKLPQFKQVLNMPTKRLRGAPCQQKIVSGDDVDLNRIPIMTCWPEDAAPLITWGLTVTRGPHKERQNLGIYRQQLIGKNKLIMRWLSHRGGALDYQEWCAAHPGERFPVSVALGADPATILGAVTPVPDTLSEYAFAGLLRGTKTEVVKCISNDLEVPASAEIVLEGYIEQGETAPEGPYGDHTGYYNEVDSFPVFTVTHITQREDAIYHSTYTGRPPDEPAVLGVALNEVFVPILQKQFPEIVDFYLPPEGCSYRLAVVTIKKQYAGHAKRVMMGVWSFLRQFMYTKFVIVCDDDVNARDWNDVIWAITTRMDPARDTVLVENTPIDYLDFASPVSGLGSKMGLDATNKWPGETQREWGRPIKKDPDVVAHIDAIWDELAIFNNGKSA</sequence>
<proteinExistence type="inferred from homology"/>
<organism>
    <name type="scientific">Escherichia coli O1:K1 / APEC</name>
    <dbReference type="NCBI Taxonomy" id="405955"/>
    <lineage>
        <taxon>Bacteria</taxon>
        <taxon>Pseudomonadati</taxon>
        <taxon>Pseudomonadota</taxon>
        <taxon>Gammaproteobacteria</taxon>
        <taxon>Enterobacterales</taxon>
        <taxon>Enterobacteriaceae</taxon>
        <taxon>Escherichia</taxon>
    </lineage>
</organism>
<dbReference type="EC" id="4.1.1.98" evidence="1"/>
<dbReference type="EMBL" id="CP000468">
    <property type="protein sequence ID" value="ABJ03320.1"/>
    <property type="status" value="ALT_INIT"/>
    <property type="molecule type" value="Genomic_DNA"/>
</dbReference>
<dbReference type="SMR" id="A1AI30"/>
<dbReference type="KEGG" id="ecv:APECO1_2614"/>
<dbReference type="HOGENOM" id="CLU_023348_4_1_6"/>
<dbReference type="UniPathway" id="UPA00232"/>
<dbReference type="Proteomes" id="UP000008216">
    <property type="component" value="Chromosome"/>
</dbReference>
<dbReference type="GO" id="GO:0005829">
    <property type="term" value="C:cytosol"/>
    <property type="evidence" value="ECO:0007669"/>
    <property type="project" value="TreeGrafter"/>
</dbReference>
<dbReference type="GO" id="GO:0005886">
    <property type="term" value="C:plasma membrane"/>
    <property type="evidence" value="ECO:0007669"/>
    <property type="project" value="UniProtKB-SubCell"/>
</dbReference>
<dbReference type="GO" id="GO:0008694">
    <property type="term" value="F:3-octaprenyl-4-hydroxybenzoate carboxy-lyase activity"/>
    <property type="evidence" value="ECO:0007669"/>
    <property type="project" value="UniProtKB-UniRule"/>
</dbReference>
<dbReference type="GO" id="GO:0046872">
    <property type="term" value="F:metal ion binding"/>
    <property type="evidence" value="ECO:0007669"/>
    <property type="project" value="UniProtKB-KW"/>
</dbReference>
<dbReference type="GO" id="GO:0006744">
    <property type="term" value="P:ubiquinone biosynthetic process"/>
    <property type="evidence" value="ECO:0007669"/>
    <property type="project" value="UniProtKB-UniRule"/>
</dbReference>
<dbReference type="FunFam" id="1.20.5.570:FF:000001">
    <property type="entry name" value="3-octaprenyl-4-hydroxybenzoate carboxy-lyase"/>
    <property type="match status" value="1"/>
</dbReference>
<dbReference type="FunFam" id="3.40.1670.10:FF:000001">
    <property type="entry name" value="3-octaprenyl-4-hydroxybenzoate carboxy-lyase"/>
    <property type="match status" value="1"/>
</dbReference>
<dbReference type="Gene3D" id="1.20.5.570">
    <property type="entry name" value="Single helix bin"/>
    <property type="match status" value="1"/>
</dbReference>
<dbReference type="Gene3D" id="3.40.1670.10">
    <property type="entry name" value="UbiD C-terminal domain-like"/>
    <property type="match status" value="1"/>
</dbReference>
<dbReference type="HAMAP" id="MF_01636">
    <property type="entry name" value="UbiD"/>
    <property type="match status" value="1"/>
</dbReference>
<dbReference type="InterPro" id="IPR002830">
    <property type="entry name" value="UbiD"/>
</dbReference>
<dbReference type="InterPro" id="IPR049381">
    <property type="entry name" value="UbiD-like_C"/>
</dbReference>
<dbReference type="InterPro" id="IPR049383">
    <property type="entry name" value="UbiD-like_N"/>
</dbReference>
<dbReference type="InterPro" id="IPR023677">
    <property type="entry name" value="UbiD_bacteria"/>
</dbReference>
<dbReference type="InterPro" id="IPR048304">
    <property type="entry name" value="UbiD_Rift_dom"/>
</dbReference>
<dbReference type="NCBIfam" id="NF008175">
    <property type="entry name" value="PRK10922.1"/>
    <property type="match status" value="1"/>
</dbReference>
<dbReference type="NCBIfam" id="TIGR00148">
    <property type="entry name" value="UbiD family decarboxylase"/>
    <property type="match status" value="1"/>
</dbReference>
<dbReference type="PANTHER" id="PTHR30108">
    <property type="entry name" value="3-OCTAPRENYL-4-HYDROXYBENZOATE CARBOXY-LYASE-RELATED"/>
    <property type="match status" value="1"/>
</dbReference>
<dbReference type="PANTHER" id="PTHR30108:SF17">
    <property type="entry name" value="FERULIC ACID DECARBOXYLASE 1"/>
    <property type="match status" value="1"/>
</dbReference>
<dbReference type="Pfam" id="PF01977">
    <property type="entry name" value="UbiD"/>
    <property type="match status" value="1"/>
</dbReference>
<dbReference type="Pfam" id="PF20696">
    <property type="entry name" value="UbiD_C"/>
    <property type="match status" value="1"/>
</dbReference>
<dbReference type="Pfam" id="PF20695">
    <property type="entry name" value="UbiD_N"/>
    <property type="match status" value="1"/>
</dbReference>
<dbReference type="SUPFAM" id="SSF50475">
    <property type="entry name" value="FMN-binding split barrel"/>
    <property type="match status" value="1"/>
</dbReference>
<dbReference type="SUPFAM" id="SSF143968">
    <property type="entry name" value="UbiD C-terminal domain-like"/>
    <property type="match status" value="1"/>
</dbReference>
<evidence type="ECO:0000255" key="1">
    <source>
        <dbReference type="HAMAP-Rule" id="MF_01636"/>
    </source>
</evidence>
<evidence type="ECO:0000305" key="2"/>
<feature type="chain" id="PRO_0000335865" description="3-octaprenyl-4-hydroxybenzoate carboxy-lyase">
    <location>
        <begin position="1"/>
        <end position="494"/>
    </location>
</feature>
<feature type="active site" description="Proton donor" evidence="1">
    <location>
        <position position="287"/>
    </location>
</feature>
<feature type="binding site" evidence="1">
    <location>
        <position position="172"/>
    </location>
    <ligand>
        <name>Mn(2+)</name>
        <dbReference type="ChEBI" id="CHEBI:29035"/>
    </ligand>
</feature>
<feature type="binding site" evidence="1">
    <location>
        <begin position="175"/>
        <end position="177"/>
    </location>
    <ligand>
        <name>prenylated FMN</name>
        <dbReference type="ChEBI" id="CHEBI:87746"/>
    </ligand>
</feature>
<feature type="binding site" evidence="1">
    <location>
        <begin position="189"/>
        <end position="191"/>
    </location>
    <ligand>
        <name>prenylated FMN</name>
        <dbReference type="ChEBI" id="CHEBI:87746"/>
    </ligand>
</feature>
<feature type="binding site" evidence="1">
    <location>
        <begin position="194"/>
        <end position="195"/>
    </location>
    <ligand>
        <name>prenylated FMN</name>
        <dbReference type="ChEBI" id="CHEBI:87746"/>
    </ligand>
</feature>
<feature type="binding site" evidence="1">
    <location>
        <position position="238"/>
    </location>
    <ligand>
        <name>Mn(2+)</name>
        <dbReference type="ChEBI" id="CHEBI:29035"/>
    </ligand>
</feature>